<sequence length="180" mass="21165">MFPMVTGFMSYGQQTIRAARYIGQSFIITLSHTNRLPITIHYPYEKSITSERFRGRIHFEFDKCIACEVCVRVCPIDLPLVDWRFEKDIKRKQLLNYSIDFGVCIFCGNCVEYCPTNCLSMTEEYELSTYDRHELNYNQIALSRLPISIMGDYTIQTIRNSTQSKIDEEKSWNSRTITDY</sequence>
<evidence type="ECO:0000255" key="1">
    <source>
        <dbReference type="HAMAP-Rule" id="MF_01351"/>
    </source>
</evidence>
<evidence type="ECO:0000312" key="2">
    <source>
        <dbReference type="Proteomes" id="UP000006591"/>
    </source>
</evidence>
<accession>Q6ENA3</accession>
<name>NDHI_ORYNI</name>
<comment type="function">
    <text evidence="1">NDH shuttles electrons from NAD(P)H:plastoquinone, via FMN and iron-sulfur (Fe-S) centers, to quinones in the photosynthetic chain and possibly in a chloroplast respiratory chain. The immediate electron acceptor for the enzyme in this species is believed to be plastoquinone. Couples the redox reaction to proton translocation, and thus conserves the redox energy in a proton gradient.</text>
</comment>
<comment type="catalytic activity">
    <reaction evidence="1">
        <text>a plastoquinone + NADH + (n+1) H(+)(in) = a plastoquinol + NAD(+) + n H(+)(out)</text>
        <dbReference type="Rhea" id="RHEA:42608"/>
        <dbReference type="Rhea" id="RHEA-COMP:9561"/>
        <dbReference type="Rhea" id="RHEA-COMP:9562"/>
        <dbReference type="ChEBI" id="CHEBI:15378"/>
        <dbReference type="ChEBI" id="CHEBI:17757"/>
        <dbReference type="ChEBI" id="CHEBI:57540"/>
        <dbReference type="ChEBI" id="CHEBI:57945"/>
        <dbReference type="ChEBI" id="CHEBI:62192"/>
    </reaction>
</comment>
<comment type="catalytic activity">
    <reaction evidence="1">
        <text>a plastoquinone + NADPH + (n+1) H(+)(in) = a plastoquinol + NADP(+) + n H(+)(out)</text>
        <dbReference type="Rhea" id="RHEA:42612"/>
        <dbReference type="Rhea" id="RHEA-COMP:9561"/>
        <dbReference type="Rhea" id="RHEA-COMP:9562"/>
        <dbReference type="ChEBI" id="CHEBI:15378"/>
        <dbReference type="ChEBI" id="CHEBI:17757"/>
        <dbReference type="ChEBI" id="CHEBI:57783"/>
        <dbReference type="ChEBI" id="CHEBI:58349"/>
        <dbReference type="ChEBI" id="CHEBI:62192"/>
    </reaction>
</comment>
<comment type="cofactor">
    <cofactor evidence="1">
        <name>[4Fe-4S] cluster</name>
        <dbReference type="ChEBI" id="CHEBI:49883"/>
    </cofactor>
    <text evidence="1">Binds 2 [4Fe-4S] clusters per subunit.</text>
</comment>
<comment type="subunit">
    <text evidence="1">NDH is composed of at least 16 different subunits, 5 of which are encoded in the nucleus.</text>
</comment>
<comment type="subcellular location">
    <subcellularLocation>
        <location evidence="1">Plastid</location>
        <location evidence="1">Chloroplast thylakoid membrane</location>
        <topology evidence="1">Peripheral membrane protein</topology>
    </subcellularLocation>
</comment>
<comment type="similarity">
    <text evidence="1">Belongs to the complex I 23 kDa subunit family.</text>
</comment>
<dbReference type="EC" id="7.1.1.-" evidence="1"/>
<dbReference type="EMBL" id="AP006728">
    <property type="protein sequence ID" value="BAD26849.1"/>
    <property type="molecule type" value="Genomic_DNA"/>
</dbReference>
<dbReference type="RefSeq" id="YP_052819.1">
    <property type="nucleotide sequence ID" value="NC_005973.1"/>
</dbReference>
<dbReference type="SMR" id="Q6ENA3"/>
<dbReference type="STRING" id="4536.Q6ENA3"/>
<dbReference type="GeneID" id="2885914"/>
<dbReference type="eggNOG" id="KOG3256">
    <property type="taxonomic scope" value="Eukaryota"/>
</dbReference>
<dbReference type="Proteomes" id="UP000006591">
    <property type="component" value="Chloroplast"/>
</dbReference>
<dbReference type="GO" id="GO:0009535">
    <property type="term" value="C:chloroplast thylakoid membrane"/>
    <property type="evidence" value="ECO:0007669"/>
    <property type="project" value="UniProtKB-SubCell"/>
</dbReference>
<dbReference type="GO" id="GO:0009536">
    <property type="term" value="C:plastid"/>
    <property type="evidence" value="ECO:0000305"/>
    <property type="project" value="Gramene"/>
</dbReference>
<dbReference type="GO" id="GO:0051539">
    <property type="term" value="F:4 iron, 4 sulfur cluster binding"/>
    <property type="evidence" value="ECO:0007669"/>
    <property type="project" value="UniProtKB-KW"/>
</dbReference>
<dbReference type="GO" id="GO:0005506">
    <property type="term" value="F:iron ion binding"/>
    <property type="evidence" value="ECO:0007669"/>
    <property type="project" value="UniProtKB-UniRule"/>
</dbReference>
<dbReference type="GO" id="GO:0008137">
    <property type="term" value="F:NADH dehydrogenase (ubiquinone) activity"/>
    <property type="evidence" value="ECO:0007669"/>
    <property type="project" value="InterPro"/>
</dbReference>
<dbReference type="GO" id="GO:0048038">
    <property type="term" value="F:quinone binding"/>
    <property type="evidence" value="ECO:0007669"/>
    <property type="project" value="UniProtKB-KW"/>
</dbReference>
<dbReference type="GO" id="GO:0019684">
    <property type="term" value="P:photosynthesis, light reaction"/>
    <property type="evidence" value="ECO:0007669"/>
    <property type="project" value="UniProtKB-UniRule"/>
</dbReference>
<dbReference type="Gene3D" id="3.30.70.3270">
    <property type="match status" value="1"/>
</dbReference>
<dbReference type="HAMAP" id="MF_01351">
    <property type="entry name" value="NDH1_NuoI"/>
    <property type="match status" value="1"/>
</dbReference>
<dbReference type="InterPro" id="IPR017896">
    <property type="entry name" value="4Fe4S_Fe-S-bd"/>
</dbReference>
<dbReference type="InterPro" id="IPR017900">
    <property type="entry name" value="4Fe4S_Fe_S_CS"/>
</dbReference>
<dbReference type="InterPro" id="IPR010226">
    <property type="entry name" value="NADH_quinone_OxRdtase_chainI"/>
</dbReference>
<dbReference type="InterPro" id="IPR004497">
    <property type="entry name" value="NDHI"/>
</dbReference>
<dbReference type="NCBIfam" id="TIGR00403">
    <property type="entry name" value="ndhI"/>
    <property type="match status" value="1"/>
</dbReference>
<dbReference type="NCBIfam" id="TIGR01971">
    <property type="entry name" value="NuoI"/>
    <property type="match status" value="1"/>
</dbReference>
<dbReference type="NCBIfam" id="NF004537">
    <property type="entry name" value="PRK05888.1-3"/>
    <property type="match status" value="1"/>
</dbReference>
<dbReference type="PANTHER" id="PTHR47275">
    <property type="entry name" value="NAD(P)H-QUINONE OXIDOREDUCTASE SUBUNIT I, CHLOROPLASTIC"/>
    <property type="match status" value="1"/>
</dbReference>
<dbReference type="PANTHER" id="PTHR47275:SF3">
    <property type="entry name" value="NAD(P)H-QUINONE OXIDOREDUCTASE SUBUNIT I, CHLOROPLASTIC"/>
    <property type="match status" value="1"/>
</dbReference>
<dbReference type="Pfam" id="PF13237">
    <property type="entry name" value="Fer4_10"/>
    <property type="match status" value="1"/>
</dbReference>
<dbReference type="SUPFAM" id="SSF54862">
    <property type="entry name" value="4Fe-4S ferredoxins"/>
    <property type="match status" value="1"/>
</dbReference>
<dbReference type="PROSITE" id="PS00198">
    <property type="entry name" value="4FE4S_FER_1"/>
    <property type="match status" value="2"/>
</dbReference>
<dbReference type="PROSITE" id="PS51379">
    <property type="entry name" value="4FE4S_FER_2"/>
    <property type="match status" value="2"/>
</dbReference>
<keyword id="KW-0004">4Fe-4S</keyword>
<keyword id="KW-0150">Chloroplast</keyword>
<keyword id="KW-0408">Iron</keyword>
<keyword id="KW-0411">Iron-sulfur</keyword>
<keyword id="KW-0472">Membrane</keyword>
<keyword id="KW-0479">Metal-binding</keyword>
<keyword id="KW-0520">NAD</keyword>
<keyword id="KW-0521">NADP</keyword>
<keyword id="KW-0934">Plastid</keyword>
<keyword id="KW-0618">Plastoquinone</keyword>
<keyword id="KW-0874">Quinone</keyword>
<keyword id="KW-1185">Reference proteome</keyword>
<keyword id="KW-0677">Repeat</keyword>
<keyword id="KW-0793">Thylakoid</keyword>
<keyword id="KW-1278">Translocase</keyword>
<feature type="chain" id="PRO_0000118710" description="NAD(P)H-quinone oxidoreductase subunit I, chloroplastic">
    <location>
        <begin position="1"/>
        <end position="180"/>
    </location>
</feature>
<feature type="domain" description="4Fe-4S ferredoxin-type 1" evidence="1">
    <location>
        <begin position="55"/>
        <end position="84"/>
    </location>
</feature>
<feature type="domain" description="4Fe-4S ferredoxin-type 2" evidence="1">
    <location>
        <begin position="95"/>
        <end position="124"/>
    </location>
</feature>
<feature type="binding site" evidence="1">
    <location>
        <position position="64"/>
    </location>
    <ligand>
        <name>[4Fe-4S] cluster</name>
        <dbReference type="ChEBI" id="CHEBI:49883"/>
        <label>1</label>
    </ligand>
</feature>
<feature type="binding site" evidence="1">
    <location>
        <position position="67"/>
    </location>
    <ligand>
        <name>[4Fe-4S] cluster</name>
        <dbReference type="ChEBI" id="CHEBI:49883"/>
        <label>1</label>
    </ligand>
</feature>
<feature type="binding site" evidence="1">
    <location>
        <position position="70"/>
    </location>
    <ligand>
        <name>[4Fe-4S] cluster</name>
        <dbReference type="ChEBI" id="CHEBI:49883"/>
        <label>1</label>
    </ligand>
</feature>
<feature type="binding site" evidence="1">
    <location>
        <position position="74"/>
    </location>
    <ligand>
        <name>[4Fe-4S] cluster</name>
        <dbReference type="ChEBI" id="CHEBI:49883"/>
        <label>2</label>
    </ligand>
</feature>
<feature type="binding site" evidence="1">
    <location>
        <position position="104"/>
    </location>
    <ligand>
        <name>[4Fe-4S] cluster</name>
        <dbReference type="ChEBI" id="CHEBI:49883"/>
        <label>2</label>
    </ligand>
</feature>
<feature type="binding site" evidence="1">
    <location>
        <position position="107"/>
    </location>
    <ligand>
        <name>[4Fe-4S] cluster</name>
        <dbReference type="ChEBI" id="CHEBI:49883"/>
        <label>2</label>
    </ligand>
</feature>
<feature type="binding site" evidence="1">
    <location>
        <position position="110"/>
    </location>
    <ligand>
        <name>[4Fe-4S] cluster</name>
        <dbReference type="ChEBI" id="CHEBI:49883"/>
        <label>2</label>
    </ligand>
</feature>
<feature type="binding site" evidence="1">
    <location>
        <position position="114"/>
    </location>
    <ligand>
        <name>[4Fe-4S] cluster</name>
        <dbReference type="ChEBI" id="CHEBI:49883"/>
        <label>1</label>
    </ligand>
</feature>
<gene>
    <name evidence="1" type="primary">ndhI</name>
</gene>
<reference key="1">
    <citation type="journal article" date="2004" name="Gene">
        <title>The complete nucleotide sequence of wild rice (Oryza nivara) chloroplast genome: first genome wide comparative sequence analysis of wild and cultivated rice.</title>
        <authorList>
            <person name="Masood M.S."/>
            <person name="Nishikawa T."/>
            <person name="Fukuoka S."/>
            <person name="Njenga P.K."/>
            <person name="Tsudzuki T."/>
            <person name="Kadowaki K."/>
        </authorList>
    </citation>
    <scope>NUCLEOTIDE SEQUENCE [LARGE SCALE GENOMIC DNA]</scope>
    <source>
        <strain evidence="2">cv. SL10</strain>
    </source>
</reference>
<proteinExistence type="inferred from homology"/>
<geneLocation type="chloroplast"/>
<organism>
    <name type="scientific">Oryza nivara</name>
    <name type="common">Indian wild rice</name>
    <name type="synonym">Oryza sativa f. spontanea</name>
    <dbReference type="NCBI Taxonomy" id="4536"/>
    <lineage>
        <taxon>Eukaryota</taxon>
        <taxon>Viridiplantae</taxon>
        <taxon>Streptophyta</taxon>
        <taxon>Embryophyta</taxon>
        <taxon>Tracheophyta</taxon>
        <taxon>Spermatophyta</taxon>
        <taxon>Magnoliopsida</taxon>
        <taxon>Liliopsida</taxon>
        <taxon>Poales</taxon>
        <taxon>Poaceae</taxon>
        <taxon>BOP clade</taxon>
        <taxon>Oryzoideae</taxon>
        <taxon>Oryzeae</taxon>
        <taxon>Oryzinae</taxon>
        <taxon>Oryza</taxon>
    </lineage>
</organism>
<protein>
    <recommendedName>
        <fullName evidence="1">NAD(P)H-quinone oxidoreductase subunit I, chloroplastic</fullName>
        <ecNumber evidence="1">7.1.1.-</ecNumber>
    </recommendedName>
    <alternativeName>
        <fullName evidence="1">NAD(P)H dehydrogenase subunit I</fullName>
        <shortName evidence="1">NDH subunit I</shortName>
    </alternativeName>
    <alternativeName>
        <fullName evidence="1">NADH-plastoquinone oxidoreductase subunit I</fullName>
    </alternativeName>
</protein>